<comment type="function">
    <text evidence="1">Part of the ABC transporter complex CcmAB involved in the biogenesis of c-type cytochromes; once thought to export heme, this seems not to be the case, but its exact role is uncertain. Responsible for energy coupling to the transport system.</text>
</comment>
<comment type="catalytic activity">
    <reaction evidence="1">
        <text>heme b(in) + ATP + H2O = heme b(out) + ADP + phosphate + H(+)</text>
        <dbReference type="Rhea" id="RHEA:19261"/>
        <dbReference type="ChEBI" id="CHEBI:15377"/>
        <dbReference type="ChEBI" id="CHEBI:15378"/>
        <dbReference type="ChEBI" id="CHEBI:30616"/>
        <dbReference type="ChEBI" id="CHEBI:43474"/>
        <dbReference type="ChEBI" id="CHEBI:60344"/>
        <dbReference type="ChEBI" id="CHEBI:456216"/>
        <dbReference type="EC" id="7.6.2.5"/>
    </reaction>
</comment>
<comment type="subunit">
    <text evidence="1">The complex is composed of two ATP-binding proteins (CcmA) and two transmembrane proteins (CcmB).</text>
</comment>
<comment type="subcellular location">
    <subcellularLocation>
        <location evidence="1">Cell inner membrane</location>
        <topology evidence="1">Peripheral membrane protein</topology>
    </subcellularLocation>
</comment>
<comment type="similarity">
    <text evidence="1">Belongs to the ABC transporter superfamily. CcmA exporter (TC 3.A.1.107) family.</text>
</comment>
<reference key="1">
    <citation type="journal article" date="2000" name="DNA Res.">
        <title>Complete genome structure of the nitrogen-fixing symbiotic bacterium Mesorhizobium loti.</title>
        <authorList>
            <person name="Kaneko T."/>
            <person name="Nakamura Y."/>
            <person name="Sato S."/>
            <person name="Asamizu E."/>
            <person name="Kato T."/>
            <person name="Sasamoto S."/>
            <person name="Watanabe A."/>
            <person name="Idesawa K."/>
            <person name="Ishikawa A."/>
            <person name="Kawashima K."/>
            <person name="Kimura T."/>
            <person name="Kishida Y."/>
            <person name="Kiyokawa C."/>
            <person name="Kohara M."/>
            <person name="Matsumoto M."/>
            <person name="Matsuno A."/>
            <person name="Mochizuki Y."/>
            <person name="Nakayama S."/>
            <person name="Nakazaki N."/>
            <person name="Shimpo S."/>
            <person name="Sugimoto M."/>
            <person name="Takeuchi C."/>
            <person name="Yamada M."/>
            <person name="Tabata S."/>
        </authorList>
    </citation>
    <scope>NUCLEOTIDE SEQUENCE [LARGE SCALE GENOMIC DNA]</scope>
    <source>
        <strain>LMG 29417 / CECT 9101 / MAFF 303099</strain>
    </source>
</reference>
<dbReference type="EC" id="7.6.2.5" evidence="1"/>
<dbReference type="EMBL" id="BA000012">
    <property type="protein sequence ID" value="BAB51016.1"/>
    <property type="molecule type" value="Genomic_DNA"/>
</dbReference>
<dbReference type="RefSeq" id="WP_010912358.1">
    <property type="nucleotide sequence ID" value="NC_002678.2"/>
</dbReference>
<dbReference type="SMR" id="Q98EA4"/>
<dbReference type="KEGG" id="mlo:mll4333"/>
<dbReference type="PATRIC" id="fig|266835.9.peg.3422"/>
<dbReference type="eggNOG" id="COG4133">
    <property type="taxonomic scope" value="Bacteria"/>
</dbReference>
<dbReference type="HOGENOM" id="CLU_000604_1_2_5"/>
<dbReference type="Proteomes" id="UP000000552">
    <property type="component" value="Chromosome"/>
</dbReference>
<dbReference type="GO" id="GO:0005886">
    <property type="term" value="C:plasma membrane"/>
    <property type="evidence" value="ECO:0007669"/>
    <property type="project" value="UniProtKB-SubCell"/>
</dbReference>
<dbReference type="GO" id="GO:0015439">
    <property type="term" value="F:ABC-type heme transporter activity"/>
    <property type="evidence" value="ECO:0007669"/>
    <property type="project" value="UniProtKB-EC"/>
</dbReference>
<dbReference type="GO" id="GO:0005524">
    <property type="term" value="F:ATP binding"/>
    <property type="evidence" value="ECO:0007669"/>
    <property type="project" value="UniProtKB-KW"/>
</dbReference>
<dbReference type="GO" id="GO:0016887">
    <property type="term" value="F:ATP hydrolysis activity"/>
    <property type="evidence" value="ECO:0007669"/>
    <property type="project" value="InterPro"/>
</dbReference>
<dbReference type="GO" id="GO:0017004">
    <property type="term" value="P:cytochrome complex assembly"/>
    <property type="evidence" value="ECO:0007669"/>
    <property type="project" value="UniProtKB-KW"/>
</dbReference>
<dbReference type="CDD" id="cd03231">
    <property type="entry name" value="ABC_CcmA_heme_exporter"/>
    <property type="match status" value="1"/>
</dbReference>
<dbReference type="Gene3D" id="3.40.50.300">
    <property type="entry name" value="P-loop containing nucleotide triphosphate hydrolases"/>
    <property type="match status" value="1"/>
</dbReference>
<dbReference type="InterPro" id="IPR003593">
    <property type="entry name" value="AAA+_ATPase"/>
</dbReference>
<dbReference type="InterPro" id="IPR003439">
    <property type="entry name" value="ABC_transporter-like_ATP-bd"/>
</dbReference>
<dbReference type="InterPro" id="IPR005895">
    <property type="entry name" value="ABC_transptr_haem_export_CcmA"/>
</dbReference>
<dbReference type="InterPro" id="IPR027417">
    <property type="entry name" value="P-loop_NTPase"/>
</dbReference>
<dbReference type="NCBIfam" id="TIGR01189">
    <property type="entry name" value="ccmA"/>
    <property type="match status" value="1"/>
</dbReference>
<dbReference type="PANTHER" id="PTHR43499">
    <property type="entry name" value="ABC TRANSPORTER I FAMILY MEMBER 1"/>
    <property type="match status" value="1"/>
</dbReference>
<dbReference type="PANTHER" id="PTHR43499:SF1">
    <property type="entry name" value="ABC TRANSPORTER I FAMILY MEMBER 1"/>
    <property type="match status" value="1"/>
</dbReference>
<dbReference type="Pfam" id="PF00005">
    <property type="entry name" value="ABC_tran"/>
    <property type="match status" value="1"/>
</dbReference>
<dbReference type="SMART" id="SM00382">
    <property type="entry name" value="AAA"/>
    <property type="match status" value="1"/>
</dbReference>
<dbReference type="SUPFAM" id="SSF52540">
    <property type="entry name" value="P-loop containing nucleoside triphosphate hydrolases"/>
    <property type="match status" value="1"/>
</dbReference>
<dbReference type="PROSITE" id="PS50893">
    <property type="entry name" value="ABC_TRANSPORTER_2"/>
    <property type="match status" value="1"/>
</dbReference>
<dbReference type="PROSITE" id="PS51243">
    <property type="entry name" value="CCMA"/>
    <property type="match status" value="1"/>
</dbReference>
<gene>
    <name evidence="1" type="primary">ccmA</name>
    <name type="ordered locus">mll4333</name>
</gene>
<feature type="chain" id="PRO_0000092201" description="Cytochrome c biogenesis ATP-binding export protein CcmA">
    <location>
        <begin position="1"/>
        <end position="201"/>
    </location>
</feature>
<feature type="domain" description="ABC transporter" evidence="1">
    <location>
        <begin position="3"/>
        <end position="200"/>
    </location>
</feature>
<feature type="binding site" evidence="1">
    <location>
        <begin position="35"/>
        <end position="42"/>
    </location>
    <ligand>
        <name>ATP</name>
        <dbReference type="ChEBI" id="CHEBI:30616"/>
    </ligand>
</feature>
<proteinExistence type="inferred from homology"/>
<sequence length="201" mass="20825">MRLIAENLGGERGGEAVFSGVGFALDQGQALVVTGPNGSGKSTLLRIIAGLLPKAEGRLLLENGGDDFPSIASACHYLGHQNAMKTALSVVENLRFWRDFNGRGDSGVEEALDTVGLGGVGHLPFGYLSTGQRRRAAIAKLLVSHRPLWLLDEPTAGLDKASEARFAGLMAGHCAGGGMIVAATHLPLGIEGAELRMGVAG</sequence>
<name>CCMA_RHILO</name>
<protein>
    <recommendedName>
        <fullName evidence="1">Cytochrome c biogenesis ATP-binding export protein CcmA</fullName>
        <ecNumber evidence="1">7.6.2.5</ecNumber>
    </recommendedName>
    <alternativeName>
        <fullName evidence="1">Heme exporter protein A</fullName>
    </alternativeName>
</protein>
<accession>Q98EA4</accession>
<organism>
    <name type="scientific">Mesorhizobium japonicum (strain LMG 29417 / CECT 9101 / MAFF 303099)</name>
    <name type="common">Mesorhizobium loti (strain MAFF 303099)</name>
    <dbReference type="NCBI Taxonomy" id="266835"/>
    <lineage>
        <taxon>Bacteria</taxon>
        <taxon>Pseudomonadati</taxon>
        <taxon>Pseudomonadota</taxon>
        <taxon>Alphaproteobacteria</taxon>
        <taxon>Hyphomicrobiales</taxon>
        <taxon>Phyllobacteriaceae</taxon>
        <taxon>Mesorhizobium</taxon>
    </lineage>
</organism>
<evidence type="ECO:0000255" key="1">
    <source>
        <dbReference type="HAMAP-Rule" id="MF_01707"/>
    </source>
</evidence>
<keyword id="KW-0067">ATP-binding</keyword>
<keyword id="KW-0997">Cell inner membrane</keyword>
<keyword id="KW-1003">Cell membrane</keyword>
<keyword id="KW-0201">Cytochrome c-type biogenesis</keyword>
<keyword id="KW-0472">Membrane</keyword>
<keyword id="KW-0547">Nucleotide-binding</keyword>
<keyword id="KW-1278">Translocase</keyword>
<keyword id="KW-0813">Transport</keyword>